<evidence type="ECO:0000255" key="1"/>
<evidence type="ECO:0000255" key="2">
    <source>
        <dbReference type="PROSITE-ProRule" id="PRU00297"/>
    </source>
</evidence>
<evidence type="ECO:0000255" key="3">
    <source>
        <dbReference type="PROSITE-ProRule" id="PRU10012"/>
    </source>
</evidence>
<evidence type="ECO:0000256" key="4">
    <source>
        <dbReference type="SAM" id="MobiDB-lite"/>
    </source>
</evidence>
<evidence type="ECO:0000305" key="5"/>
<sequence length="348" mass="37460">MKNLFNLFLMFFFAMPILSLSENPTNFSESCEDGSGETGSSFGIGFDLVLDFGLYRNSCPEAESIVYSWVETTVLEDPRMAASLLRLHFHDCFVNGCDASVLLDDTEGLVGEKTAPPNLNSLRGFEVIDSIKSDIESVCPETVSCADILAMAARDSVVVSGGPRWEVEVGRKDSRTASKQAATNGLPSPNSTVSTLISTFQNLGLSQTDMVALSGGHTLGKARCTSFTARLQPLQTGQPANHGDNLEFLESLQQLCSTVGPSVGITQLDLVTPSTFDNQYYVNLLSGEGLLPSDQALAVQDPGTRAIVETYATDQSVFFEDFKNAMVKMGGIPGGSNSEIRKNCRMIN</sequence>
<dbReference type="EC" id="1.11.1.7"/>
<dbReference type="EMBL" id="Z97340">
    <property type="protein sequence ID" value="CAB10406.1"/>
    <property type="status" value="ALT_SEQ"/>
    <property type="molecule type" value="Genomic_DNA"/>
</dbReference>
<dbReference type="EMBL" id="AL161543">
    <property type="protein sequence ID" value="CAB78669.1"/>
    <property type="status" value="ALT_SEQ"/>
    <property type="molecule type" value="Genomic_DNA"/>
</dbReference>
<dbReference type="EMBL" id="CP002687">
    <property type="protein sequence ID" value="AEE83724.2"/>
    <property type="molecule type" value="Genomic_DNA"/>
</dbReference>
<dbReference type="EMBL" id="BT011747">
    <property type="protein sequence ID" value="AAS49110.1"/>
    <property type="molecule type" value="mRNA"/>
</dbReference>
<dbReference type="EMBL" id="AK175661">
    <property type="protein sequence ID" value="BAD43424.1"/>
    <property type="status" value="ALT_INIT"/>
    <property type="molecule type" value="mRNA"/>
</dbReference>
<dbReference type="EMBL" id="AK175982">
    <property type="protein sequence ID" value="BAD43745.1"/>
    <property type="status" value="ALT_INIT"/>
    <property type="molecule type" value="mRNA"/>
</dbReference>
<dbReference type="RefSeq" id="NP_193362.3">
    <property type="nucleotide sequence ID" value="NM_117724.4"/>
</dbReference>
<dbReference type="SMR" id="O23474"/>
<dbReference type="FunCoup" id="O23474">
    <property type="interactions" value="133"/>
</dbReference>
<dbReference type="STRING" id="3702.O23474"/>
<dbReference type="PeroxiBase" id="206">
    <property type="entry name" value="AtPrx40"/>
</dbReference>
<dbReference type="GlyCosmos" id="O23474">
    <property type="glycosylation" value="2 sites, No reported glycans"/>
</dbReference>
<dbReference type="GlyGen" id="O23474">
    <property type="glycosylation" value="2 sites"/>
</dbReference>
<dbReference type="PaxDb" id="3702-AT4G16270.1"/>
<dbReference type="ProteomicsDB" id="236419"/>
<dbReference type="EnsemblPlants" id="AT4G16270.1">
    <property type="protein sequence ID" value="AT4G16270.1"/>
    <property type="gene ID" value="AT4G16270"/>
</dbReference>
<dbReference type="GeneID" id="827322"/>
<dbReference type="Gramene" id="AT4G16270.1">
    <property type="protein sequence ID" value="AT4G16270.1"/>
    <property type="gene ID" value="AT4G16270"/>
</dbReference>
<dbReference type="KEGG" id="ath:AT4G16270"/>
<dbReference type="Araport" id="AT4G16270"/>
<dbReference type="TAIR" id="AT4G16270">
    <property type="gene designation" value="PRX40"/>
</dbReference>
<dbReference type="eggNOG" id="ENOG502QTWH">
    <property type="taxonomic scope" value="Eukaryota"/>
</dbReference>
<dbReference type="HOGENOM" id="CLU_010543_0_1_1"/>
<dbReference type="InParanoid" id="O23474"/>
<dbReference type="OMA" id="YKNSCPE"/>
<dbReference type="PhylomeDB" id="O23474"/>
<dbReference type="BioCyc" id="ARA:AT4G16270-MONOMER"/>
<dbReference type="PRO" id="PR:O23474"/>
<dbReference type="Proteomes" id="UP000006548">
    <property type="component" value="Chromosome 4"/>
</dbReference>
<dbReference type="ExpressionAtlas" id="O23474">
    <property type="expression patterns" value="baseline and differential"/>
</dbReference>
<dbReference type="GO" id="GO:0005576">
    <property type="term" value="C:extracellular region"/>
    <property type="evidence" value="ECO:0007669"/>
    <property type="project" value="UniProtKB-SubCell"/>
</dbReference>
<dbReference type="GO" id="GO:0020037">
    <property type="term" value="F:heme binding"/>
    <property type="evidence" value="ECO:0007669"/>
    <property type="project" value="InterPro"/>
</dbReference>
<dbReference type="GO" id="GO:0140825">
    <property type="term" value="F:lactoperoxidase activity"/>
    <property type="evidence" value="ECO:0007669"/>
    <property type="project" value="UniProtKB-EC"/>
</dbReference>
<dbReference type="GO" id="GO:0046872">
    <property type="term" value="F:metal ion binding"/>
    <property type="evidence" value="ECO:0007669"/>
    <property type="project" value="UniProtKB-KW"/>
</dbReference>
<dbReference type="GO" id="GO:0042744">
    <property type="term" value="P:hydrogen peroxide catabolic process"/>
    <property type="evidence" value="ECO:0007669"/>
    <property type="project" value="UniProtKB-KW"/>
</dbReference>
<dbReference type="GO" id="GO:0006979">
    <property type="term" value="P:response to oxidative stress"/>
    <property type="evidence" value="ECO:0007669"/>
    <property type="project" value="InterPro"/>
</dbReference>
<dbReference type="CDD" id="cd00693">
    <property type="entry name" value="secretory_peroxidase"/>
    <property type="match status" value="1"/>
</dbReference>
<dbReference type="FunFam" id="1.10.420.10:FF:000001">
    <property type="entry name" value="Peroxidase"/>
    <property type="match status" value="1"/>
</dbReference>
<dbReference type="FunFam" id="1.10.520.10:FF:000001">
    <property type="entry name" value="Peroxidase"/>
    <property type="match status" value="1"/>
</dbReference>
<dbReference type="Gene3D" id="1.10.520.10">
    <property type="match status" value="1"/>
</dbReference>
<dbReference type="Gene3D" id="1.10.420.10">
    <property type="entry name" value="Peroxidase, domain 2"/>
    <property type="match status" value="1"/>
</dbReference>
<dbReference type="InterPro" id="IPR002016">
    <property type="entry name" value="Haem_peroxidase"/>
</dbReference>
<dbReference type="InterPro" id="IPR010255">
    <property type="entry name" value="Haem_peroxidase_sf"/>
</dbReference>
<dbReference type="InterPro" id="IPR000823">
    <property type="entry name" value="Peroxidase_pln"/>
</dbReference>
<dbReference type="InterPro" id="IPR019794">
    <property type="entry name" value="Peroxidases_AS"/>
</dbReference>
<dbReference type="InterPro" id="IPR019793">
    <property type="entry name" value="Peroxidases_heam-ligand_BS"/>
</dbReference>
<dbReference type="InterPro" id="IPR033905">
    <property type="entry name" value="Secretory_peroxidase"/>
</dbReference>
<dbReference type="PANTHER" id="PTHR31388:SF28">
    <property type="entry name" value="PEROXIDASE 40"/>
    <property type="match status" value="1"/>
</dbReference>
<dbReference type="PANTHER" id="PTHR31388">
    <property type="entry name" value="PEROXIDASE 72-RELATED"/>
    <property type="match status" value="1"/>
</dbReference>
<dbReference type="Pfam" id="PF00141">
    <property type="entry name" value="peroxidase"/>
    <property type="match status" value="1"/>
</dbReference>
<dbReference type="PRINTS" id="PR00458">
    <property type="entry name" value="PEROXIDASE"/>
</dbReference>
<dbReference type="PRINTS" id="PR00461">
    <property type="entry name" value="PLPEROXIDASE"/>
</dbReference>
<dbReference type="SUPFAM" id="SSF48113">
    <property type="entry name" value="Heme-dependent peroxidases"/>
    <property type="match status" value="1"/>
</dbReference>
<dbReference type="PROSITE" id="PS00435">
    <property type="entry name" value="PEROXIDASE_1"/>
    <property type="match status" value="1"/>
</dbReference>
<dbReference type="PROSITE" id="PS00436">
    <property type="entry name" value="PEROXIDASE_2"/>
    <property type="match status" value="1"/>
</dbReference>
<dbReference type="PROSITE" id="PS50873">
    <property type="entry name" value="PEROXIDASE_4"/>
    <property type="match status" value="1"/>
</dbReference>
<comment type="function">
    <text>Removal of H(2)O(2), oxidation of toxic reductants, biosynthesis and degradation of lignin, suberization, auxin catabolism, response to environmental stresses such as wounding, pathogen attack and oxidative stress. These functions might be dependent on each isozyme/isoform in each plant tissue.</text>
</comment>
<comment type="catalytic activity">
    <reaction>
        <text>2 a phenolic donor + H2O2 = 2 a phenolic radical donor + 2 H2O</text>
        <dbReference type="Rhea" id="RHEA:56136"/>
        <dbReference type="ChEBI" id="CHEBI:15377"/>
        <dbReference type="ChEBI" id="CHEBI:16240"/>
        <dbReference type="ChEBI" id="CHEBI:139520"/>
        <dbReference type="ChEBI" id="CHEBI:139521"/>
        <dbReference type="EC" id="1.11.1.7"/>
    </reaction>
</comment>
<comment type="cofactor">
    <cofactor evidence="2">
        <name>heme b</name>
        <dbReference type="ChEBI" id="CHEBI:60344"/>
    </cofactor>
    <text evidence="2">Binds 1 heme b (iron(II)-protoporphyrin IX) group per subunit.</text>
</comment>
<comment type="cofactor">
    <cofactor evidence="2">
        <name>Ca(2+)</name>
        <dbReference type="ChEBI" id="CHEBI:29108"/>
    </cofactor>
    <text evidence="2">Binds 2 calcium ions per subunit.</text>
</comment>
<comment type="subcellular location">
    <subcellularLocation>
        <location evidence="2">Secreted</location>
    </subcellularLocation>
</comment>
<comment type="miscellaneous">
    <text>There are 73 peroxidase genes in A.thaliana.</text>
</comment>
<comment type="similarity">
    <text evidence="2">Belongs to the peroxidase family. Classical plant (class III) peroxidase subfamily.</text>
</comment>
<comment type="sequence caution" evidence="5">
    <conflict type="erroneous initiation">
        <sequence resource="EMBL-CDS" id="BAD43424"/>
    </conflict>
    <text>Extended N-terminus.</text>
</comment>
<comment type="sequence caution" evidence="5">
    <conflict type="erroneous initiation">
        <sequence resource="EMBL-CDS" id="BAD43745"/>
    </conflict>
    <text>Extended N-terminus.</text>
</comment>
<comment type="sequence caution" evidence="5">
    <conflict type="erroneous gene model prediction">
        <sequence resource="EMBL-CDS" id="CAB10406"/>
    </conflict>
</comment>
<comment type="sequence caution" evidence="5">
    <conflict type="erroneous gene model prediction">
        <sequence resource="EMBL-CDS" id="CAB78669"/>
    </conflict>
</comment>
<accession>O23474</accession>
<accession>F4JLR5</accession>
<accession>Q53XE3</accession>
<accession>Q67ZY5</accession>
<protein>
    <recommendedName>
        <fullName>Peroxidase 40</fullName>
        <shortName>Atperox P40</shortName>
        <ecNumber>1.11.1.7</ecNumber>
    </recommendedName>
</protein>
<name>PER40_ARATH</name>
<keyword id="KW-0106">Calcium</keyword>
<keyword id="KW-1015">Disulfide bond</keyword>
<keyword id="KW-0325">Glycoprotein</keyword>
<keyword id="KW-0349">Heme</keyword>
<keyword id="KW-0376">Hydrogen peroxide</keyword>
<keyword id="KW-0408">Iron</keyword>
<keyword id="KW-0479">Metal-binding</keyword>
<keyword id="KW-0560">Oxidoreductase</keyword>
<keyword id="KW-0575">Peroxidase</keyword>
<keyword id="KW-1185">Reference proteome</keyword>
<keyword id="KW-0964">Secreted</keyword>
<keyword id="KW-0732">Signal</keyword>
<feature type="signal peptide" evidence="1">
    <location>
        <begin position="1"/>
        <end position="21"/>
    </location>
</feature>
<feature type="chain" id="PRO_0000023706" description="Peroxidase 40">
    <location>
        <begin position="22"/>
        <end position="348"/>
    </location>
</feature>
<feature type="region of interest" description="Disordered" evidence="4">
    <location>
        <begin position="170"/>
        <end position="189"/>
    </location>
</feature>
<feature type="compositionally biased region" description="Polar residues" evidence="4">
    <location>
        <begin position="177"/>
        <end position="189"/>
    </location>
</feature>
<feature type="active site" description="Proton acceptor" evidence="2 3">
    <location>
        <position position="90"/>
    </location>
</feature>
<feature type="binding site" evidence="2">
    <location>
        <position position="91"/>
    </location>
    <ligand>
        <name>Ca(2+)</name>
        <dbReference type="ChEBI" id="CHEBI:29108"/>
        <label>1</label>
    </ligand>
</feature>
<feature type="binding site" evidence="2">
    <location>
        <position position="94"/>
    </location>
    <ligand>
        <name>Ca(2+)</name>
        <dbReference type="ChEBI" id="CHEBI:29108"/>
        <label>1</label>
    </ligand>
</feature>
<feature type="binding site" evidence="2">
    <location>
        <position position="96"/>
    </location>
    <ligand>
        <name>Ca(2+)</name>
        <dbReference type="ChEBI" id="CHEBI:29108"/>
        <label>1</label>
    </ligand>
</feature>
<feature type="binding site" evidence="2">
    <location>
        <position position="98"/>
    </location>
    <ligand>
        <name>Ca(2+)</name>
        <dbReference type="ChEBI" id="CHEBI:29108"/>
        <label>1</label>
    </ligand>
</feature>
<feature type="binding site" evidence="2">
    <location>
        <position position="100"/>
    </location>
    <ligand>
        <name>Ca(2+)</name>
        <dbReference type="ChEBI" id="CHEBI:29108"/>
        <label>1</label>
    </ligand>
</feature>
<feature type="binding site" evidence="2">
    <location>
        <position position="187"/>
    </location>
    <ligand>
        <name>substrate</name>
    </ligand>
</feature>
<feature type="binding site" description="axial binding residue" evidence="2">
    <location>
        <position position="217"/>
    </location>
    <ligand>
        <name>heme b</name>
        <dbReference type="ChEBI" id="CHEBI:60344"/>
    </ligand>
    <ligandPart>
        <name>Fe</name>
        <dbReference type="ChEBI" id="CHEBI:18248"/>
    </ligandPart>
</feature>
<feature type="binding site" evidence="2">
    <location>
        <position position="218"/>
    </location>
    <ligand>
        <name>Ca(2+)</name>
        <dbReference type="ChEBI" id="CHEBI:29108"/>
        <label>2</label>
    </ligand>
</feature>
<feature type="binding site" evidence="2">
    <location>
        <position position="269"/>
    </location>
    <ligand>
        <name>Ca(2+)</name>
        <dbReference type="ChEBI" id="CHEBI:29108"/>
        <label>2</label>
    </ligand>
</feature>
<feature type="binding site" evidence="2">
    <location>
        <position position="272"/>
    </location>
    <ligand>
        <name>Ca(2+)</name>
        <dbReference type="ChEBI" id="CHEBI:29108"/>
        <label>2</label>
    </ligand>
</feature>
<feature type="binding site" evidence="2">
    <location>
        <position position="277"/>
    </location>
    <ligand>
        <name>Ca(2+)</name>
        <dbReference type="ChEBI" id="CHEBI:29108"/>
        <label>2</label>
    </ligand>
</feature>
<feature type="site" description="Transition state stabilizer" evidence="2">
    <location>
        <position position="86"/>
    </location>
</feature>
<feature type="glycosylation site" description="N-linked (GlcNAc...) asparagine" evidence="1">
    <location>
        <position position="26"/>
    </location>
</feature>
<feature type="glycosylation site" description="N-linked (GlcNAc...) asparagine" evidence="1">
    <location>
        <position position="190"/>
    </location>
</feature>
<feature type="disulfide bond" evidence="2">
    <location>
        <begin position="59"/>
        <end position="139"/>
    </location>
</feature>
<feature type="disulfide bond" evidence="2">
    <location>
        <begin position="92"/>
        <end position="97"/>
    </location>
</feature>
<feature type="disulfide bond" evidence="2">
    <location>
        <begin position="145"/>
        <end position="344"/>
    </location>
</feature>
<feature type="disulfide bond" evidence="2">
    <location>
        <begin position="224"/>
        <end position="256"/>
    </location>
</feature>
<reference key="1">
    <citation type="journal article" date="1998" name="Nature">
        <title>Analysis of 1.9 Mb of contiguous sequence from chromosome 4 of Arabidopsis thaliana.</title>
        <authorList>
            <person name="Bevan M."/>
            <person name="Bancroft I."/>
            <person name="Bent E."/>
            <person name="Love K."/>
            <person name="Goodman H.M."/>
            <person name="Dean C."/>
            <person name="Bergkamp R."/>
            <person name="Dirkse W."/>
            <person name="van Staveren M."/>
            <person name="Stiekema W."/>
            <person name="Drost L."/>
            <person name="Ridley P."/>
            <person name="Hudson S.-A."/>
            <person name="Patel K."/>
            <person name="Murphy G."/>
            <person name="Piffanelli P."/>
            <person name="Wedler H."/>
            <person name="Wedler E."/>
            <person name="Wambutt R."/>
            <person name="Weitzenegger T."/>
            <person name="Pohl T."/>
            <person name="Terryn N."/>
            <person name="Gielen J."/>
            <person name="Villarroel R."/>
            <person name="De Clercq R."/>
            <person name="van Montagu M."/>
            <person name="Lecharny A."/>
            <person name="Aubourg S."/>
            <person name="Gy I."/>
            <person name="Kreis M."/>
            <person name="Lao N."/>
            <person name="Kavanagh T."/>
            <person name="Hempel S."/>
            <person name="Kotter P."/>
            <person name="Entian K.-D."/>
            <person name="Rieger M."/>
            <person name="Schaefer M."/>
            <person name="Funk B."/>
            <person name="Mueller-Auer S."/>
            <person name="Silvey M."/>
            <person name="James R."/>
            <person name="Monfort A."/>
            <person name="Pons A."/>
            <person name="Puigdomenech P."/>
            <person name="Douka A."/>
            <person name="Voukelatou E."/>
            <person name="Milioni D."/>
            <person name="Hatzopoulos P."/>
            <person name="Piravandi E."/>
            <person name="Obermaier B."/>
            <person name="Hilbert H."/>
            <person name="Duesterhoeft A."/>
            <person name="Moores T."/>
            <person name="Jones J.D.G."/>
            <person name="Eneva T."/>
            <person name="Palme K."/>
            <person name="Benes V."/>
            <person name="Rechmann S."/>
            <person name="Ansorge W."/>
            <person name="Cooke R."/>
            <person name="Berger C."/>
            <person name="Delseny M."/>
            <person name="Voet M."/>
            <person name="Volckaert G."/>
            <person name="Mewes H.-W."/>
            <person name="Klosterman S."/>
            <person name="Schueller C."/>
            <person name="Chalwatzis N."/>
        </authorList>
    </citation>
    <scope>NUCLEOTIDE SEQUENCE [LARGE SCALE GENOMIC DNA]</scope>
    <source>
        <strain>cv. Columbia</strain>
    </source>
</reference>
<reference key="2">
    <citation type="journal article" date="1999" name="Nature">
        <title>Sequence and analysis of chromosome 4 of the plant Arabidopsis thaliana.</title>
        <authorList>
            <person name="Mayer K.F.X."/>
            <person name="Schueller C."/>
            <person name="Wambutt R."/>
            <person name="Murphy G."/>
            <person name="Volckaert G."/>
            <person name="Pohl T."/>
            <person name="Duesterhoeft A."/>
            <person name="Stiekema W."/>
            <person name="Entian K.-D."/>
            <person name="Terryn N."/>
            <person name="Harris B."/>
            <person name="Ansorge W."/>
            <person name="Brandt P."/>
            <person name="Grivell L.A."/>
            <person name="Rieger M."/>
            <person name="Weichselgartner M."/>
            <person name="de Simone V."/>
            <person name="Obermaier B."/>
            <person name="Mache R."/>
            <person name="Mueller M."/>
            <person name="Kreis M."/>
            <person name="Delseny M."/>
            <person name="Puigdomenech P."/>
            <person name="Watson M."/>
            <person name="Schmidtheini T."/>
            <person name="Reichert B."/>
            <person name="Portetelle D."/>
            <person name="Perez-Alonso M."/>
            <person name="Boutry M."/>
            <person name="Bancroft I."/>
            <person name="Vos P."/>
            <person name="Hoheisel J."/>
            <person name="Zimmermann W."/>
            <person name="Wedler H."/>
            <person name="Ridley P."/>
            <person name="Langham S.-A."/>
            <person name="McCullagh B."/>
            <person name="Bilham L."/>
            <person name="Robben J."/>
            <person name="van der Schueren J."/>
            <person name="Grymonprez B."/>
            <person name="Chuang Y.-J."/>
            <person name="Vandenbussche F."/>
            <person name="Braeken M."/>
            <person name="Weltjens I."/>
            <person name="Voet M."/>
            <person name="Bastiaens I."/>
            <person name="Aert R."/>
            <person name="Defoor E."/>
            <person name="Weitzenegger T."/>
            <person name="Bothe G."/>
            <person name="Ramsperger U."/>
            <person name="Hilbert H."/>
            <person name="Braun M."/>
            <person name="Holzer E."/>
            <person name="Brandt A."/>
            <person name="Peters S."/>
            <person name="van Staveren M."/>
            <person name="Dirkse W."/>
            <person name="Mooijman P."/>
            <person name="Klein Lankhorst R."/>
            <person name="Rose M."/>
            <person name="Hauf J."/>
            <person name="Koetter P."/>
            <person name="Berneiser S."/>
            <person name="Hempel S."/>
            <person name="Feldpausch M."/>
            <person name="Lamberth S."/>
            <person name="Van den Daele H."/>
            <person name="De Keyser A."/>
            <person name="Buysshaert C."/>
            <person name="Gielen J."/>
            <person name="Villarroel R."/>
            <person name="De Clercq R."/>
            <person name="van Montagu M."/>
            <person name="Rogers J."/>
            <person name="Cronin A."/>
            <person name="Quail M.A."/>
            <person name="Bray-Allen S."/>
            <person name="Clark L."/>
            <person name="Doggett J."/>
            <person name="Hall S."/>
            <person name="Kay M."/>
            <person name="Lennard N."/>
            <person name="McLay K."/>
            <person name="Mayes R."/>
            <person name="Pettett A."/>
            <person name="Rajandream M.A."/>
            <person name="Lyne M."/>
            <person name="Benes V."/>
            <person name="Rechmann S."/>
            <person name="Borkova D."/>
            <person name="Bloecker H."/>
            <person name="Scharfe M."/>
            <person name="Grimm M."/>
            <person name="Loehnert T.-H."/>
            <person name="Dose S."/>
            <person name="de Haan M."/>
            <person name="Maarse A.C."/>
            <person name="Schaefer M."/>
            <person name="Mueller-Auer S."/>
            <person name="Gabel C."/>
            <person name="Fuchs M."/>
            <person name="Fartmann B."/>
            <person name="Granderath K."/>
            <person name="Dauner D."/>
            <person name="Herzl A."/>
            <person name="Neumann S."/>
            <person name="Argiriou A."/>
            <person name="Vitale D."/>
            <person name="Liguori R."/>
            <person name="Piravandi E."/>
            <person name="Massenet O."/>
            <person name="Quigley F."/>
            <person name="Clabauld G."/>
            <person name="Muendlein A."/>
            <person name="Felber R."/>
            <person name="Schnabl S."/>
            <person name="Hiller R."/>
            <person name="Schmidt W."/>
            <person name="Lecharny A."/>
            <person name="Aubourg S."/>
            <person name="Chefdor F."/>
            <person name="Cooke R."/>
            <person name="Berger C."/>
            <person name="Monfort A."/>
            <person name="Casacuberta E."/>
            <person name="Gibbons T."/>
            <person name="Weber N."/>
            <person name="Vandenbol M."/>
            <person name="Bargues M."/>
            <person name="Terol J."/>
            <person name="Torres A."/>
            <person name="Perez-Perez A."/>
            <person name="Purnelle B."/>
            <person name="Bent E."/>
            <person name="Johnson S."/>
            <person name="Tacon D."/>
            <person name="Jesse T."/>
            <person name="Heijnen L."/>
            <person name="Schwarz S."/>
            <person name="Scholler P."/>
            <person name="Heber S."/>
            <person name="Francs P."/>
            <person name="Bielke C."/>
            <person name="Frishman D."/>
            <person name="Haase D."/>
            <person name="Lemcke K."/>
            <person name="Mewes H.-W."/>
            <person name="Stocker S."/>
            <person name="Zaccaria P."/>
            <person name="Bevan M."/>
            <person name="Wilson R.K."/>
            <person name="de la Bastide M."/>
            <person name="Habermann K."/>
            <person name="Parnell L."/>
            <person name="Dedhia N."/>
            <person name="Gnoj L."/>
            <person name="Schutz K."/>
            <person name="Huang E."/>
            <person name="Spiegel L."/>
            <person name="Sekhon M."/>
            <person name="Murray J."/>
            <person name="Sheet P."/>
            <person name="Cordes M."/>
            <person name="Abu-Threideh J."/>
            <person name="Stoneking T."/>
            <person name="Kalicki J."/>
            <person name="Graves T."/>
            <person name="Harmon G."/>
            <person name="Edwards J."/>
            <person name="Latreille P."/>
            <person name="Courtney L."/>
            <person name="Cloud J."/>
            <person name="Abbott A."/>
            <person name="Scott K."/>
            <person name="Johnson D."/>
            <person name="Minx P."/>
            <person name="Bentley D."/>
            <person name="Fulton B."/>
            <person name="Miller N."/>
            <person name="Greco T."/>
            <person name="Kemp K."/>
            <person name="Kramer J."/>
            <person name="Fulton L."/>
            <person name="Mardis E."/>
            <person name="Dante M."/>
            <person name="Pepin K."/>
            <person name="Hillier L.W."/>
            <person name="Nelson J."/>
            <person name="Spieth J."/>
            <person name="Ryan E."/>
            <person name="Andrews S."/>
            <person name="Geisel C."/>
            <person name="Layman D."/>
            <person name="Du H."/>
            <person name="Ali J."/>
            <person name="Berghoff A."/>
            <person name="Jones K."/>
            <person name="Drone K."/>
            <person name="Cotton M."/>
            <person name="Joshu C."/>
            <person name="Antonoiu B."/>
            <person name="Zidanic M."/>
            <person name="Strong C."/>
            <person name="Sun H."/>
            <person name="Lamar B."/>
            <person name="Yordan C."/>
            <person name="Ma P."/>
            <person name="Zhong J."/>
            <person name="Preston R."/>
            <person name="Vil D."/>
            <person name="Shekher M."/>
            <person name="Matero A."/>
            <person name="Shah R."/>
            <person name="Swaby I.K."/>
            <person name="O'Shaughnessy A."/>
            <person name="Rodriguez M."/>
            <person name="Hoffman J."/>
            <person name="Till S."/>
            <person name="Granat S."/>
            <person name="Shohdy N."/>
            <person name="Hasegawa A."/>
            <person name="Hameed A."/>
            <person name="Lodhi M."/>
            <person name="Johnson A."/>
            <person name="Chen E."/>
            <person name="Marra M.A."/>
            <person name="Martienssen R."/>
            <person name="McCombie W.R."/>
        </authorList>
    </citation>
    <scope>NUCLEOTIDE SEQUENCE [LARGE SCALE GENOMIC DNA]</scope>
    <source>
        <strain>cv. Columbia</strain>
    </source>
</reference>
<reference key="3">
    <citation type="journal article" date="2017" name="Plant J.">
        <title>Araport11: a complete reannotation of the Arabidopsis thaliana reference genome.</title>
        <authorList>
            <person name="Cheng C.Y."/>
            <person name="Krishnakumar V."/>
            <person name="Chan A.P."/>
            <person name="Thibaud-Nissen F."/>
            <person name="Schobel S."/>
            <person name="Town C.D."/>
        </authorList>
    </citation>
    <scope>GENOME REANNOTATION</scope>
    <source>
        <strain>cv. Columbia</strain>
    </source>
</reference>
<reference key="4">
    <citation type="submission" date="2004-03" db="EMBL/GenBank/DDBJ databases">
        <title>Arabidopsis ORF clones.</title>
        <authorList>
            <person name="Cheuk R.F."/>
            <person name="Chen H."/>
            <person name="Kim C.J."/>
            <person name="Shinn P."/>
            <person name="Carninci P."/>
            <person name="Hayashizaki Y."/>
            <person name="Ishida J."/>
            <person name="Kamiya A."/>
            <person name="Kawai J."/>
            <person name="Narusaka M."/>
            <person name="Sakurai T."/>
            <person name="Satou M."/>
            <person name="Seki M."/>
            <person name="Shinozaki K."/>
            <person name="Ecker J.R."/>
        </authorList>
    </citation>
    <scope>NUCLEOTIDE SEQUENCE [LARGE SCALE MRNA]</scope>
    <source>
        <strain>cv. Columbia</strain>
    </source>
</reference>
<reference key="5">
    <citation type="submission" date="2004-09" db="EMBL/GenBank/DDBJ databases">
        <title>Large-scale analysis of RIKEN Arabidopsis full-length (RAFL) cDNAs.</title>
        <authorList>
            <person name="Totoki Y."/>
            <person name="Seki M."/>
            <person name="Ishida J."/>
            <person name="Nakajima M."/>
            <person name="Enju A."/>
            <person name="Kamiya A."/>
            <person name="Narusaka M."/>
            <person name="Shin-i T."/>
            <person name="Nakagawa M."/>
            <person name="Sakamoto N."/>
            <person name="Oishi K."/>
            <person name="Kohara Y."/>
            <person name="Kobayashi M."/>
            <person name="Toyoda A."/>
            <person name="Sakaki Y."/>
            <person name="Sakurai T."/>
            <person name="Iida K."/>
            <person name="Akiyama K."/>
            <person name="Satou M."/>
            <person name="Toyoda T."/>
            <person name="Konagaya A."/>
            <person name="Carninci P."/>
            <person name="Kawai J."/>
            <person name="Hayashizaki Y."/>
            <person name="Shinozaki K."/>
        </authorList>
    </citation>
    <scope>NUCLEOTIDE SEQUENCE [LARGE SCALE MRNA]</scope>
    <source>
        <strain>cv. Columbia</strain>
    </source>
</reference>
<reference key="6">
    <citation type="journal article" date="2002" name="Gene">
        <title>Analysis and expression of the class III peroxidase large gene family in Arabidopsis thaliana.</title>
        <authorList>
            <person name="Tognolli M."/>
            <person name="Penel C."/>
            <person name="Greppin H."/>
            <person name="Simon P."/>
        </authorList>
    </citation>
    <scope>GENE FAMILY ORGANIZATION</scope>
    <scope>NOMENCLATURE</scope>
    <source>
        <strain>cv. Columbia</strain>
    </source>
</reference>
<organism>
    <name type="scientific">Arabidopsis thaliana</name>
    <name type="common">Mouse-ear cress</name>
    <dbReference type="NCBI Taxonomy" id="3702"/>
    <lineage>
        <taxon>Eukaryota</taxon>
        <taxon>Viridiplantae</taxon>
        <taxon>Streptophyta</taxon>
        <taxon>Embryophyta</taxon>
        <taxon>Tracheophyta</taxon>
        <taxon>Spermatophyta</taxon>
        <taxon>Magnoliopsida</taxon>
        <taxon>eudicotyledons</taxon>
        <taxon>Gunneridae</taxon>
        <taxon>Pentapetalae</taxon>
        <taxon>rosids</taxon>
        <taxon>malvids</taxon>
        <taxon>Brassicales</taxon>
        <taxon>Brassicaceae</taxon>
        <taxon>Camelineae</taxon>
        <taxon>Arabidopsis</taxon>
    </lineage>
</organism>
<gene>
    <name type="primary">PER40</name>
    <name type="synonym">P40</name>
    <name type="ordered locus">At4g16270</name>
    <name type="ORF">dl4175w</name>
    <name type="ORF">FCAALL.329</name>
</gene>
<proteinExistence type="evidence at transcript level"/>